<evidence type="ECO:0000255" key="1">
    <source>
        <dbReference type="HAMAP-Rule" id="MF_00420"/>
    </source>
</evidence>
<protein>
    <recommendedName>
        <fullName evidence="1">Phosphoribosylformylglycinamidine synthase subunit PurL</fullName>
        <shortName evidence="1">FGAM synthase</shortName>
        <ecNumber evidence="1">6.3.5.3</ecNumber>
    </recommendedName>
    <alternativeName>
        <fullName evidence="1">Formylglycinamide ribonucleotide amidotransferase subunit II</fullName>
        <shortName evidence="1">FGAR amidotransferase II</shortName>
        <shortName evidence="1">FGAR-AT II</shortName>
    </alternativeName>
    <alternativeName>
        <fullName evidence="1">Glutamine amidotransferase PurL</fullName>
    </alternativeName>
    <alternativeName>
        <fullName evidence="1">Phosphoribosylformylglycinamidine synthase subunit II</fullName>
    </alternativeName>
</protein>
<sequence>MSADPPITPELVAAHGLKPDEYQRILTLIGREPSFTELGIFSAMWNEHCSYKSSRIHLRKLPTKAPWVIQGPGENAGVIDIGDGEACIFKMESHNHPSYIEPHQGAATGVGGILRDVFTMGARPVASLDLLRFGAPEHPLMRHLIAGVASGIGSYGNSFGVPTVGGSTKFDRRYNGNILVNAMAVGIARQDEIFYAKATGVGNPIVYLGSKTGRDGIHGATMASAAFEADAQEKRPTVQVGDPFAEKLLLEACLELMKTGAVIAIQDMGAAGLTSSAVEMGAKGNLGIELDLDAVPCREPGMSAYEMLLSESQERMLMVLAPEKAAEAEAVFRKWGLDFAIIGKTTDDLRFVIKHEGEIKADLPIKELGDEAPVYDRPSVLTPRPATIAADTIVPPISHGEALLRLIGSPDLASKLWITEQYDSLILGNTIQGPGGDAALIRLGDGPKGLALTADVTQRYCEADPYEGGKQAVTMAWRNLTAVGALPLAVTDNLNFGNPENPKIMGQFIGCLEGIGEACRALDFPIVSGNVSLYNASEGQDIPPTPAIGGVGLLEDASRGATLSIKRPGDAILLLGETQGWLGASLYLRDICGREDGAPPVVDLALEKRIGNFLRGLIANRALTAVHTLTDGGLAVGLAKMALAGGIGARIDIPGHCPAHAYLFGEDQARYLVTAAPEKAEAIRIEAEQLGIACQLIGRTGGPTLELGQEASVAIEDLRRAFEEWLPNHMTGIVIE</sequence>
<gene>
    <name evidence="1" type="primary">purL</name>
    <name type="ordered locus">Bind_3119</name>
</gene>
<reference key="1">
    <citation type="journal article" date="2010" name="J. Bacteriol.">
        <title>Complete genome sequence of Beijerinckia indica subsp. indica.</title>
        <authorList>
            <person name="Tamas I."/>
            <person name="Dedysh S.N."/>
            <person name="Liesack W."/>
            <person name="Stott M.B."/>
            <person name="Alam M."/>
            <person name="Murrell J.C."/>
            <person name="Dunfield P.F."/>
        </authorList>
    </citation>
    <scope>NUCLEOTIDE SEQUENCE [LARGE SCALE GENOMIC DNA]</scope>
    <source>
        <strain>ATCC 9039 / DSM 1715 / NCIMB 8712</strain>
    </source>
</reference>
<organism>
    <name type="scientific">Beijerinckia indica subsp. indica (strain ATCC 9039 / DSM 1715 / NCIMB 8712)</name>
    <dbReference type="NCBI Taxonomy" id="395963"/>
    <lineage>
        <taxon>Bacteria</taxon>
        <taxon>Pseudomonadati</taxon>
        <taxon>Pseudomonadota</taxon>
        <taxon>Alphaproteobacteria</taxon>
        <taxon>Hyphomicrobiales</taxon>
        <taxon>Beijerinckiaceae</taxon>
        <taxon>Beijerinckia</taxon>
    </lineage>
</organism>
<proteinExistence type="inferred from homology"/>
<keyword id="KW-0067">ATP-binding</keyword>
<keyword id="KW-0963">Cytoplasm</keyword>
<keyword id="KW-0436">Ligase</keyword>
<keyword id="KW-0460">Magnesium</keyword>
<keyword id="KW-0479">Metal-binding</keyword>
<keyword id="KW-0547">Nucleotide-binding</keyword>
<keyword id="KW-0658">Purine biosynthesis</keyword>
<keyword id="KW-1185">Reference proteome</keyword>
<comment type="function">
    <text evidence="1">Part of the phosphoribosylformylglycinamidine synthase complex involved in the purines biosynthetic pathway. Catalyzes the ATP-dependent conversion of formylglycinamide ribonucleotide (FGAR) and glutamine to yield formylglycinamidine ribonucleotide (FGAM) and glutamate. The FGAM synthase complex is composed of three subunits. PurQ produces an ammonia molecule by converting glutamine to glutamate. PurL transfers the ammonia molecule to FGAR to form FGAM in an ATP-dependent manner. PurS interacts with PurQ and PurL and is thought to assist in the transfer of the ammonia molecule from PurQ to PurL.</text>
</comment>
<comment type="catalytic activity">
    <reaction evidence="1">
        <text>N(2)-formyl-N(1)-(5-phospho-beta-D-ribosyl)glycinamide + L-glutamine + ATP + H2O = 2-formamido-N(1)-(5-O-phospho-beta-D-ribosyl)acetamidine + L-glutamate + ADP + phosphate + H(+)</text>
        <dbReference type="Rhea" id="RHEA:17129"/>
        <dbReference type="ChEBI" id="CHEBI:15377"/>
        <dbReference type="ChEBI" id="CHEBI:15378"/>
        <dbReference type="ChEBI" id="CHEBI:29985"/>
        <dbReference type="ChEBI" id="CHEBI:30616"/>
        <dbReference type="ChEBI" id="CHEBI:43474"/>
        <dbReference type="ChEBI" id="CHEBI:58359"/>
        <dbReference type="ChEBI" id="CHEBI:147286"/>
        <dbReference type="ChEBI" id="CHEBI:147287"/>
        <dbReference type="ChEBI" id="CHEBI:456216"/>
        <dbReference type="EC" id="6.3.5.3"/>
    </reaction>
</comment>
<comment type="pathway">
    <text evidence="1">Purine metabolism; IMP biosynthesis via de novo pathway; 5-amino-1-(5-phospho-D-ribosyl)imidazole from N(2)-formyl-N(1)-(5-phospho-D-ribosyl)glycinamide: step 1/2.</text>
</comment>
<comment type="subunit">
    <text evidence="1">Monomer. Part of the FGAM synthase complex composed of 1 PurL, 1 PurQ and 2 PurS subunits.</text>
</comment>
<comment type="subcellular location">
    <subcellularLocation>
        <location evidence="1">Cytoplasm</location>
    </subcellularLocation>
</comment>
<comment type="similarity">
    <text evidence="1">Belongs to the FGAMS family.</text>
</comment>
<accession>B2IC83</accession>
<dbReference type="EC" id="6.3.5.3" evidence="1"/>
<dbReference type="EMBL" id="CP001016">
    <property type="protein sequence ID" value="ACB96680.1"/>
    <property type="molecule type" value="Genomic_DNA"/>
</dbReference>
<dbReference type="RefSeq" id="WP_012386028.1">
    <property type="nucleotide sequence ID" value="NC_010581.1"/>
</dbReference>
<dbReference type="SMR" id="B2IC83"/>
<dbReference type="STRING" id="395963.Bind_3119"/>
<dbReference type="KEGG" id="bid:Bind_3119"/>
<dbReference type="eggNOG" id="COG0046">
    <property type="taxonomic scope" value="Bacteria"/>
</dbReference>
<dbReference type="HOGENOM" id="CLU_003100_0_1_5"/>
<dbReference type="OrthoDB" id="9804441at2"/>
<dbReference type="UniPathway" id="UPA00074">
    <property type="reaction ID" value="UER00128"/>
</dbReference>
<dbReference type="Proteomes" id="UP000001695">
    <property type="component" value="Chromosome"/>
</dbReference>
<dbReference type="GO" id="GO:0005737">
    <property type="term" value="C:cytoplasm"/>
    <property type="evidence" value="ECO:0007669"/>
    <property type="project" value="UniProtKB-SubCell"/>
</dbReference>
<dbReference type="GO" id="GO:0005524">
    <property type="term" value="F:ATP binding"/>
    <property type="evidence" value="ECO:0007669"/>
    <property type="project" value="UniProtKB-UniRule"/>
</dbReference>
<dbReference type="GO" id="GO:0000287">
    <property type="term" value="F:magnesium ion binding"/>
    <property type="evidence" value="ECO:0007669"/>
    <property type="project" value="UniProtKB-UniRule"/>
</dbReference>
<dbReference type="GO" id="GO:0004642">
    <property type="term" value="F:phosphoribosylformylglycinamidine synthase activity"/>
    <property type="evidence" value="ECO:0007669"/>
    <property type="project" value="UniProtKB-UniRule"/>
</dbReference>
<dbReference type="GO" id="GO:0006189">
    <property type="term" value="P:'de novo' IMP biosynthetic process"/>
    <property type="evidence" value="ECO:0007669"/>
    <property type="project" value="UniProtKB-UniRule"/>
</dbReference>
<dbReference type="CDD" id="cd02203">
    <property type="entry name" value="PurL_repeat1"/>
    <property type="match status" value="1"/>
</dbReference>
<dbReference type="CDD" id="cd02204">
    <property type="entry name" value="PurL_repeat2"/>
    <property type="match status" value="1"/>
</dbReference>
<dbReference type="FunFam" id="3.30.1330.10:FF:000004">
    <property type="entry name" value="Phosphoribosylformylglycinamidine synthase subunit PurL"/>
    <property type="match status" value="1"/>
</dbReference>
<dbReference type="Gene3D" id="3.90.650.10">
    <property type="entry name" value="PurM-like C-terminal domain"/>
    <property type="match status" value="2"/>
</dbReference>
<dbReference type="Gene3D" id="3.30.1330.10">
    <property type="entry name" value="PurM-like, N-terminal domain"/>
    <property type="match status" value="2"/>
</dbReference>
<dbReference type="HAMAP" id="MF_00420">
    <property type="entry name" value="PurL_2"/>
    <property type="match status" value="1"/>
</dbReference>
<dbReference type="InterPro" id="IPR010074">
    <property type="entry name" value="PRibForGlyAmidine_synth_PurL"/>
</dbReference>
<dbReference type="InterPro" id="IPR041609">
    <property type="entry name" value="PurL_linker"/>
</dbReference>
<dbReference type="InterPro" id="IPR010918">
    <property type="entry name" value="PurM-like_C_dom"/>
</dbReference>
<dbReference type="InterPro" id="IPR036676">
    <property type="entry name" value="PurM-like_C_sf"/>
</dbReference>
<dbReference type="InterPro" id="IPR016188">
    <property type="entry name" value="PurM-like_N"/>
</dbReference>
<dbReference type="InterPro" id="IPR036921">
    <property type="entry name" value="PurM-like_N_sf"/>
</dbReference>
<dbReference type="NCBIfam" id="TIGR01736">
    <property type="entry name" value="FGAM_synth_II"/>
    <property type="match status" value="1"/>
</dbReference>
<dbReference type="NCBIfam" id="NF002290">
    <property type="entry name" value="PRK01213.1"/>
    <property type="match status" value="1"/>
</dbReference>
<dbReference type="PANTHER" id="PTHR43555">
    <property type="entry name" value="PHOSPHORIBOSYLFORMYLGLYCINAMIDINE SYNTHASE SUBUNIT PURL"/>
    <property type="match status" value="1"/>
</dbReference>
<dbReference type="PANTHER" id="PTHR43555:SF1">
    <property type="entry name" value="PHOSPHORIBOSYLFORMYLGLYCINAMIDINE SYNTHASE SUBUNIT PURL"/>
    <property type="match status" value="1"/>
</dbReference>
<dbReference type="Pfam" id="PF00586">
    <property type="entry name" value="AIRS"/>
    <property type="match status" value="2"/>
</dbReference>
<dbReference type="Pfam" id="PF02769">
    <property type="entry name" value="AIRS_C"/>
    <property type="match status" value="2"/>
</dbReference>
<dbReference type="Pfam" id="PF18072">
    <property type="entry name" value="FGAR-AT_linker"/>
    <property type="match status" value="1"/>
</dbReference>
<dbReference type="PIRSF" id="PIRSF001587">
    <property type="entry name" value="FGAM_synthase_II"/>
    <property type="match status" value="1"/>
</dbReference>
<dbReference type="SUPFAM" id="SSF56042">
    <property type="entry name" value="PurM C-terminal domain-like"/>
    <property type="match status" value="2"/>
</dbReference>
<dbReference type="SUPFAM" id="SSF55326">
    <property type="entry name" value="PurM N-terminal domain-like"/>
    <property type="match status" value="2"/>
</dbReference>
<name>PURL_BEII9</name>
<feature type="chain" id="PRO_1000194823" description="Phosphoribosylformylglycinamidine synthase subunit PurL">
    <location>
        <begin position="1"/>
        <end position="736"/>
    </location>
</feature>
<feature type="active site" evidence="1">
    <location>
        <position position="48"/>
    </location>
</feature>
<feature type="active site" description="Proton acceptor" evidence="1">
    <location>
        <position position="94"/>
    </location>
</feature>
<feature type="binding site" evidence="1">
    <location>
        <position position="51"/>
    </location>
    <ligand>
        <name>ATP</name>
        <dbReference type="ChEBI" id="CHEBI:30616"/>
    </ligand>
</feature>
<feature type="binding site" evidence="1">
    <location>
        <position position="90"/>
    </location>
    <ligand>
        <name>ATP</name>
        <dbReference type="ChEBI" id="CHEBI:30616"/>
    </ligand>
</feature>
<feature type="binding site" evidence="1">
    <location>
        <position position="92"/>
    </location>
    <ligand>
        <name>Mg(2+)</name>
        <dbReference type="ChEBI" id="CHEBI:18420"/>
        <label>1</label>
    </ligand>
</feature>
<feature type="binding site" evidence="1">
    <location>
        <begin position="93"/>
        <end position="96"/>
    </location>
    <ligand>
        <name>substrate</name>
    </ligand>
</feature>
<feature type="binding site" evidence="1">
    <location>
        <position position="115"/>
    </location>
    <ligand>
        <name>substrate</name>
    </ligand>
</feature>
<feature type="binding site" evidence="1">
    <location>
        <position position="116"/>
    </location>
    <ligand>
        <name>Mg(2+)</name>
        <dbReference type="ChEBI" id="CHEBI:18420"/>
        <label>2</label>
    </ligand>
</feature>
<feature type="binding site" evidence="1">
    <location>
        <position position="239"/>
    </location>
    <ligand>
        <name>substrate</name>
    </ligand>
</feature>
<feature type="binding site" evidence="1">
    <location>
        <position position="267"/>
    </location>
    <ligand>
        <name>Mg(2+)</name>
        <dbReference type="ChEBI" id="CHEBI:18420"/>
        <label>2</label>
    </ligand>
</feature>
<feature type="binding site" evidence="1">
    <location>
        <begin position="311"/>
        <end position="313"/>
    </location>
    <ligand>
        <name>substrate</name>
    </ligand>
</feature>
<feature type="binding site" evidence="1">
    <location>
        <position position="492"/>
    </location>
    <ligand>
        <name>ATP</name>
        <dbReference type="ChEBI" id="CHEBI:30616"/>
    </ligand>
</feature>
<feature type="binding site" evidence="1">
    <location>
        <position position="529"/>
    </location>
    <ligand>
        <name>ATP</name>
        <dbReference type="ChEBI" id="CHEBI:30616"/>
    </ligand>
</feature>
<feature type="binding site" evidence="1">
    <location>
        <position position="530"/>
    </location>
    <ligand>
        <name>Mg(2+)</name>
        <dbReference type="ChEBI" id="CHEBI:18420"/>
        <label>1</label>
    </ligand>
</feature>
<feature type="binding site" evidence="1">
    <location>
        <position position="532"/>
    </location>
    <ligand>
        <name>substrate</name>
    </ligand>
</feature>